<keyword id="KW-1064">Adaptive immunity</keyword>
<keyword id="KW-1003">Cell membrane</keyword>
<keyword id="KW-1015">Disulfide bond</keyword>
<keyword id="KW-0391">Immunity</keyword>
<keyword id="KW-1280">Immunoglobulin</keyword>
<keyword id="KW-0393">Immunoglobulin domain</keyword>
<keyword id="KW-0472">Membrane</keyword>
<keyword id="KW-1267">Proteomics identification</keyword>
<keyword id="KW-1185">Reference proteome</keyword>
<keyword id="KW-0964">Secreted</keyword>
<keyword id="KW-0732">Signal</keyword>
<dbReference type="EMBL" id="AC245015">
    <property type="status" value="NOT_ANNOTATED_CDS"/>
    <property type="molecule type" value="Genomic_DNA"/>
</dbReference>
<dbReference type="SMR" id="A0A0C4DH67"/>
<dbReference type="FunCoup" id="A0A0C4DH67">
    <property type="interactions" value="294"/>
</dbReference>
<dbReference type="IntAct" id="A0A0C4DH67">
    <property type="interactions" value="3"/>
</dbReference>
<dbReference type="MINT" id="A0A0C4DH67"/>
<dbReference type="IMGT_GENE-DB" id="IGKV1-8"/>
<dbReference type="BioMuta" id="IGKV1-8"/>
<dbReference type="jPOST" id="A0A0C4DH67"/>
<dbReference type="MassIVE" id="A0A0C4DH67"/>
<dbReference type="Ensembl" id="ENST00000495489.1">
    <property type="protein sequence ID" value="ENSP00000419211.1"/>
    <property type="gene ID" value="ENSG00000240671.4"/>
</dbReference>
<dbReference type="Ensembl" id="ENST00000631614.2">
    <property type="protein sequence ID" value="ENSP00000488413.2"/>
    <property type="gene ID" value="ENSG00000283113.2"/>
</dbReference>
<dbReference type="AGR" id="HGNC:5743"/>
<dbReference type="GeneCards" id="IGKV1-8"/>
<dbReference type="HGNC" id="HGNC:5743">
    <property type="gene designation" value="IGKV1-8"/>
</dbReference>
<dbReference type="HPA" id="ENSG00000240671">
    <property type="expression patterns" value="Tissue enhanced (intestine, lymphoid tissue, urinary bladder)"/>
</dbReference>
<dbReference type="neXtProt" id="NX_A0A0C4DH67"/>
<dbReference type="OpenTargets" id="ENSG00000240671"/>
<dbReference type="VEuPathDB" id="HostDB:ENSG00000240671"/>
<dbReference type="GeneTree" id="ENSGT00940000153048"/>
<dbReference type="HOGENOM" id="CLU_077975_4_1_1"/>
<dbReference type="InParanoid" id="A0A0C4DH67"/>
<dbReference type="OMA" id="INCRASH"/>
<dbReference type="PAN-GO" id="A0A0C4DH67">
    <property type="GO annotations" value="3 GO annotations based on evolutionary models"/>
</dbReference>
<dbReference type="PhylomeDB" id="A0A0C4DH67"/>
<dbReference type="Pharos" id="A0A0C4DH67">
    <property type="development level" value="Tdark"/>
</dbReference>
<dbReference type="PRO" id="PR:A0A0C4DH67"/>
<dbReference type="Proteomes" id="UP000005640">
    <property type="component" value="Chromosome 2"/>
</dbReference>
<dbReference type="RNAct" id="A0A0C4DH67">
    <property type="molecule type" value="protein"/>
</dbReference>
<dbReference type="Bgee" id="ENSG00000240671">
    <property type="expression patterns" value="Expressed in spleen and 82 other cell types or tissues"/>
</dbReference>
<dbReference type="GO" id="GO:0005576">
    <property type="term" value="C:extracellular region"/>
    <property type="evidence" value="ECO:0007669"/>
    <property type="project" value="UniProtKB-SubCell"/>
</dbReference>
<dbReference type="GO" id="GO:0019814">
    <property type="term" value="C:immunoglobulin complex"/>
    <property type="evidence" value="ECO:0000318"/>
    <property type="project" value="GO_Central"/>
</dbReference>
<dbReference type="GO" id="GO:0005886">
    <property type="term" value="C:plasma membrane"/>
    <property type="evidence" value="ECO:0007669"/>
    <property type="project" value="UniProtKB-SubCell"/>
</dbReference>
<dbReference type="GO" id="GO:0002250">
    <property type="term" value="P:adaptive immune response"/>
    <property type="evidence" value="ECO:0007669"/>
    <property type="project" value="UniProtKB-KW"/>
</dbReference>
<dbReference type="GO" id="GO:0006955">
    <property type="term" value="P:immune response"/>
    <property type="evidence" value="ECO:0000318"/>
    <property type="project" value="GO_Central"/>
</dbReference>
<dbReference type="FunFam" id="2.60.40.10:FF:000212">
    <property type="entry name" value="Immunoglobulin kappa chain variable 12-38"/>
    <property type="match status" value="1"/>
</dbReference>
<dbReference type="Gene3D" id="2.60.40.10">
    <property type="entry name" value="Immunoglobulins"/>
    <property type="match status" value="1"/>
</dbReference>
<dbReference type="InterPro" id="IPR007110">
    <property type="entry name" value="Ig-like_dom"/>
</dbReference>
<dbReference type="InterPro" id="IPR036179">
    <property type="entry name" value="Ig-like_dom_sf"/>
</dbReference>
<dbReference type="InterPro" id="IPR013783">
    <property type="entry name" value="Ig-like_fold"/>
</dbReference>
<dbReference type="InterPro" id="IPR013106">
    <property type="entry name" value="Ig_V-set"/>
</dbReference>
<dbReference type="InterPro" id="IPR050150">
    <property type="entry name" value="IgV_Light_Chain"/>
</dbReference>
<dbReference type="PANTHER" id="PTHR23267">
    <property type="entry name" value="IMMUNOGLOBULIN LIGHT CHAIN"/>
    <property type="match status" value="1"/>
</dbReference>
<dbReference type="Pfam" id="PF07686">
    <property type="entry name" value="V-set"/>
    <property type="match status" value="1"/>
</dbReference>
<dbReference type="SMART" id="SM00406">
    <property type="entry name" value="IGv"/>
    <property type="match status" value="1"/>
</dbReference>
<dbReference type="SUPFAM" id="SSF48726">
    <property type="entry name" value="Immunoglobulin"/>
    <property type="match status" value="1"/>
</dbReference>
<dbReference type="PROSITE" id="PS50835">
    <property type="entry name" value="IG_LIKE"/>
    <property type="match status" value="1"/>
</dbReference>
<feature type="signal peptide" evidence="2">
    <location>
        <begin position="1"/>
        <end position="20"/>
    </location>
</feature>
<feature type="chain" id="PRO_5002170070" description="Immunoglobulin kappa variable 1-8" evidence="2">
    <location>
        <begin position="21"/>
        <end position="115"/>
    </location>
</feature>
<feature type="domain" description="Ig-like" evidence="3">
    <location>
        <begin position="21"/>
        <end position="115" status="greater than"/>
    </location>
</feature>
<feature type="region of interest" description="Framework-1" evidence="1">
    <location>
        <begin position="21"/>
        <end position="43"/>
    </location>
</feature>
<feature type="region of interest" description="Complementarity-determining-1" evidence="1">
    <location>
        <begin position="44"/>
        <end position="54"/>
    </location>
</feature>
<feature type="region of interest" description="Framework-2" evidence="1">
    <location>
        <begin position="55"/>
        <end position="69"/>
    </location>
</feature>
<feature type="region of interest" description="Complementarity-determining-2" evidence="1">
    <location>
        <begin position="70"/>
        <end position="76"/>
    </location>
</feature>
<feature type="region of interest" description="Framework-3" evidence="1">
    <location>
        <begin position="77"/>
        <end position="108"/>
    </location>
</feature>
<feature type="region of interest" description="Complementarity-determining-3" evidence="1">
    <location>
        <begin position="109"/>
        <end position="115" status="greater than"/>
    </location>
</feature>
<feature type="disulfide bond" evidence="3">
    <location>
        <begin position="43"/>
        <end position="108"/>
    </location>
</feature>
<feature type="non-terminal residue">
    <location>
        <position position="115"/>
    </location>
</feature>
<evidence type="ECO:0000250" key="1">
    <source>
        <dbReference type="UniProtKB" id="P01602"/>
    </source>
</evidence>
<evidence type="ECO:0000255" key="2"/>
<evidence type="ECO:0000255" key="3">
    <source>
        <dbReference type="PROSITE-ProRule" id="PRU00114"/>
    </source>
</evidence>
<evidence type="ECO:0000303" key="4">
    <source>
    </source>
</evidence>
<evidence type="ECO:0000303" key="5">
    <source>
    </source>
</evidence>
<evidence type="ECO:0000303" key="6">
    <source>
    </source>
</evidence>
<evidence type="ECO:0000303" key="7">
    <source>
    </source>
</evidence>
<evidence type="ECO:0000303" key="8">
    <source>
    </source>
</evidence>
<evidence type="ECO:0000303" key="9">
    <source ref="3"/>
</evidence>
<evidence type="ECO:0000305" key="10"/>
<protein>
    <recommendedName>
        <fullName evidence="4 9">Immunoglobulin kappa variable 1-8</fullName>
    </recommendedName>
</protein>
<organism>
    <name type="scientific">Homo sapiens</name>
    <name type="common">Human</name>
    <dbReference type="NCBI Taxonomy" id="9606"/>
    <lineage>
        <taxon>Eukaryota</taxon>
        <taxon>Metazoa</taxon>
        <taxon>Chordata</taxon>
        <taxon>Craniata</taxon>
        <taxon>Vertebrata</taxon>
        <taxon>Euteleostomi</taxon>
        <taxon>Mammalia</taxon>
        <taxon>Eutheria</taxon>
        <taxon>Euarchontoglires</taxon>
        <taxon>Primates</taxon>
        <taxon>Haplorrhini</taxon>
        <taxon>Catarrhini</taxon>
        <taxon>Hominidae</taxon>
        <taxon>Homo</taxon>
    </lineage>
</organism>
<accession>A0A0C4DH67</accession>
<proteinExistence type="evidence at protein level"/>
<sequence>MRVPAQLLGLLLLWLPGARCAIRMTQSPSSFSASTGDRVTITCRASQGISSYLAWYQQKPGKAPKLLIYAASTLQSGVPSRFSGSGSGTDFTLTISCLQSEDFATYYCQQYYSYP</sequence>
<gene>
    <name evidence="4 9" type="primary">IGKV1-8</name>
</gene>
<reference key="1">
    <citation type="journal article" date="2005" name="Nature">
        <title>Generation and annotation of the DNA sequences of human chromosomes 2 and 4.</title>
        <authorList>
            <person name="Hillier L.W."/>
            <person name="Graves T.A."/>
            <person name="Fulton R.S."/>
            <person name="Fulton L.A."/>
            <person name="Pepin K.H."/>
            <person name="Minx P."/>
            <person name="Wagner-McPherson C."/>
            <person name="Layman D."/>
            <person name="Wylie K."/>
            <person name="Sekhon M."/>
            <person name="Becker M.C."/>
            <person name="Fewell G.A."/>
            <person name="Delehaunty K.D."/>
            <person name="Miner T.L."/>
            <person name="Nash W.E."/>
            <person name="Kremitzki C."/>
            <person name="Oddy L."/>
            <person name="Du H."/>
            <person name="Sun H."/>
            <person name="Bradshaw-Cordum H."/>
            <person name="Ali J."/>
            <person name="Carter J."/>
            <person name="Cordes M."/>
            <person name="Harris A."/>
            <person name="Isak A."/>
            <person name="van Brunt A."/>
            <person name="Nguyen C."/>
            <person name="Du F."/>
            <person name="Courtney L."/>
            <person name="Kalicki J."/>
            <person name="Ozersky P."/>
            <person name="Abbott S."/>
            <person name="Armstrong J."/>
            <person name="Belter E.A."/>
            <person name="Caruso L."/>
            <person name="Cedroni M."/>
            <person name="Cotton M."/>
            <person name="Davidson T."/>
            <person name="Desai A."/>
            <person name="Elliott G."/>
            <person name="Erb T."/>
            <person name="Fronick C."/>
            <person name="Gaige T."/>
            <person name="Haakenson W."/>
            <person name="Haglund K."/>
            <person name="Holmes A."/>
            <person name="Harkins R."/>
            <person name="Kim K."/>
            <person name="Kruchowski S.S."/>
            <person name="Strong C.M."/>
            <person name="Grewal N."/>
            <person name="Goyea E."/>
            <person name="Hou S."/>
            <person name="Levy A."/>
            <person name="Martinka S."/>
            <person name="Mead K."/>
            <person name="McLellan M.D."/>
            <person name="Meyer R."/>
            <person name="Randall-Maher J."/>
            <person name="Tomlinson C."/>
            <person name="Dauphin-Kohlberg S."/>
            <person name="Kozlowicz-Reilly A."/>
            <person name="Shah N."/>
            <person name="Swearengen-Shahid S."/>
            <person name="Snider J."/>
            <person name="Strong J.T."/>
            <person name="Thompson J."/>
            <person name="Yoakum M."/>
            <person name="Leonard S."/>
            <person name="Pearman C."/>
            <person name="Trani L."/>
            <person name="Radionenko M."/>
            <person name="Waligorski J.E."/>
            <person name="Wang C."/>
            <person name="Rock S.M."/>
            <person name="Tin-Wollam A.-M."/>
            <person name="Maupin R."/>
            <person name="Latreille P."/>
            <person name="Wendl M.C."/>
            <person name="Yang S.-P."/>
            <person name="Pohl C."/>
            <person name="Wallis J.W."/>
            <person name="Spieth J."/>
            <person name="Bieri T.A."/>
            <person name="Berkowicz N."/>
            <person name="Nelson J.O."/>
            <person name="Osborne J."/>
            <person name="Ding L."/>
            <person name="Meyer R."/>
            <person name="Sabo A."/>
            <person name="Shotland Y."/>
            <person name="Sinha P."/>
            <person name="Wohldmann P.E."/>
            <person name="Cook L.L."/>
            <person name="Hickenbotham M.T."/>
            <person name="Eldred J."/>
            <person name="Williams D."/>
            <person name="Jones T.A."/>
            <person name="She X."/>
            <person name="Ciccarelli F.D."/>
            <person name="Izaurralde E."/>
            <person name="Taylor J."/>
            <person name="Schmutz J."/>
            <person name="Myers R.M."/>
            <person name="Cox D.R."/>
            <person name="Huang X."/>
            <person name="McPherson J.D."/>
            <person name="Mardis E.R."/>
            <person name="Clifton S.W."/>
            <person name="Warren W.C."/>
            <person name="Chinwalla A.T."/>
            <person name="Eddy S.R."/>
            <person name="Marra M.A."/>
            <person name="Ovcharenko I."/>
            <person name="Furey T.S."/>
            <person name="Miller W."/>
            <person name="Eichler E.E."/>
            <person name="Bork P."/>
            <person name="Suyama M."/>
            <person name="Torrents D."/>
            <person name="Waterston R.H."/>
            <person name="Wilson R.K."/>
        </authorList>
    </citation>
    <scope>NUCLEOTIDE SEQUENCE [LARGE SCALE GENOMIC DNA] (IMGT ALLELE IGKV1-8*01)</scope>
</reference>
<reference key="2">
    <citation type="journal article" date="2001" name="Exp. Clin. Immunogenet.">
        <title>Nomenclature of the human immunoglobulin kappa (IGK) genes.</title>
        <authorList>
            <person name="Lefranc M.P."/>
        </authorList>
    </citation>
    <scope>NOMEMCLATURE</scope>
</reference>
<reference key="3">
    <citation type="book" date="2001" name="The Immunoglobulin FactsBook.">
        <title>The Immunoglobulin FactsBook.</title>
        <editorList>
            <person name="Lefranc M.P."/>
            <person name="Lefranc G."/>
        </editorList>
        <authorList>
            <person name="Lefranc M.P."/>
            <person name="Lefranc G."/>
        </authorList>
    </citation>
    <scope>NOMENCLATURE</scope>
</reference>
<reference key="4">
    <citation type="journal article" date="2007" name="Annu. Rev. Genet.">
        <title>Immunoglobulin somatic hypermutation.</title>
        <authorList>
            <person name="Teng G."/>
            <person name="Papavasiliou F.N."/>
        </authorList>
    </citation>
    <scope>REVIEW ON SOMATIC HYPERMUTATION</scope>
</reference>
<reference key="5">
    <citation type="journal article" date="2010" name="J. Allergy Clin. Immunol.">
        <title>Structure and function of immunoglobulins.</title>
        <authorList>
            <person name="Schroeder H.W. Jr."/>
            <person name="Cavacini L."/>
        </authorList>
    </citation>
    <scope>REVIEW ON IMMUNOGLOBULINS</scope>
</reference>
<reference key="6">
    <citation type="journal article" date="2012" name="Nat. Rev. Immunol.">
        <title>Molecular programming of B cell memory.</title>
        <authorList>
            <person name="McHeyzer-Williams M."/>
            <person name="Okitsu S."/>
            <person name="Wang N."/>
            <person name="McHeyzer-Williams L."/>
        </authorList>
    </citation>
    <scope>REVIEW ON FUNCTION</scope>
</reference>
<reference key="7">
    <citation type="journal article" date="2014" name="Front. Immunol.">
        <title>Immunoglobulin and T Cell Receptor Genes: IMGT((R)) and the Birth and Rise of Immunoinformatics.</title>
        <authorList>
            <person name="Lefranc M.P."/>
        </authorList>
    </citation>
    <scope>NOMENCLATURE</scope>
</reference>
<comment type="function">
    <text evidence="5 6 7 8">V region of the variable domain of immunoglobulin light chains that participates in the antigen recognition (PubMed:24600447). Immunoglobulins, also known as antibodies, are membrane-bound or secreted glycoproteins produced by B lymphocytes. In the recognition phase of humoral immunity, the membrane-bound immunoglobulins serve as receptors which, upon binding of a specific antigen, trigger the clonal expansion and differentiation of B lymphocytes into immunoglobulins-secreting plasma cells. Secreted immunoglobulins mediate the effector phase of humoral immunity, which results in the elimination of bound antigens (PubMed:20176268, PubMed:22158414). The antigen binding site is formed by the variable domain of one heavy chain, together with that of its associated light chain. Thus, each immunoglobulin has two antigen binding sites with remarkable affinity for a particular antigen. The variable domains are assembled by a process called V-(D)-J rearrangement and can then be subjected to somatic hypermutations which, after exposure to antigen and selection, allow affinity maturation for a particular antigen (PubMed:17576170, PubMed:20176268).</text>
</comment>
<comment type="subunit">
    <text evidence="6">Immunoglobulins are composed of two identical heavy chains and two identical light chains; disulfide-linked.</text>
</comment>
<comment type="subcellular location">
    <subcellularLocation>
        <location evidence="6 7">Secreted</location>
    </subcellularLocation>
    <subcellularLocation>
        <location evidence="6 7">Cell membrane</location>
    </subcellularLocation>
</comment>
<comment type="polymorphism">
    <text>There are several alleles. The sequence shown is that of IMGT allele IGKV1-8*01.</text>
</comment>
<comment type="caution">
    <text evidence="10">For an example of a full-length immunoglobulin kappa light chain see AC P0DOX7.</text>
</comment>
<name>KV108_HUMAN</name>